<evidence type="ECO:0000255" key="1">
    <source>
        <dbReference type="HAMAP-Rule" id="MF_01816"/>
    </source>
</evidence>
<evidence type="ECO:0000255" key="2">
    <source>
        <dbReference type="PROSITE-ProRule" id="PRU01246"/>
    </source>
</evidence>
<evidence type="ECO:0000255" key="3">
    <source>
        <dbReference type="PROSITE-ProRule" id="PRU01248"/>
    </source>
</evidence>
<dbReference type="EMBL" id="CP000387">
    <property type="protein sequence ID" value="ABN44577.1"/>
    <property type="molecule type" value="Genomic_DNA"/>
</dbReference>
<dbReference type="RefSeq" id="WP_011836963.1">
    <property type="nucleotide sequence ID" value="NC_009009.1"/>
</dbReference>
<dbReference type="RefSeq" id="YP_001035127.1">
    <property type="nucleotide sequence ID" value="NC_009009.1"/>
</dbReference>
<dbReference type="SMR" id="A3CN22"/>
<dbReference type="STRING" id="388919.SSA_1171"/>
<dbReference type="KEGG" id="ssa:SSA_1171"/>
<dbReference type="PATRIC" id="fig|388919.9.peg.1114"/>
<dbReference type="eggNOG" id="COG4974">
    <property type="taxonomic scope" value="Bacteria"/>
</dbReference>
<dbReference type="HOGENOM" id="CLU_027562_9_6_9"/>
<dbReference type="OrthoDB" id="283809at2"/>
<dbReference type="Proteomes" id="UP000002148">
    <property type="component" value="Chromosome"/>
</dbReference>
<dbReference type="GO" id="GO:0005737">
    <property type="term" value="C:cytoplasm"/>
    <property type="evidence" value="ECO:0007669"/>
    <property type="project" value="UniProtKB-SubCell"/>
</dbReference>
<dbReference type="GO" id="GO:0003677">
    <property type="term" value="F:DNA binding"/>
    <property type="evidence" value="ECO:0007669"/>
    <property type="project" value="UniProtKB-KW"/>
</dbReference>
<dbReference type="GO" id="GO:0009037">
    <property type="term" value="F:tyrosine-based site-specific recombinase activity"/>
    <property type="evidence" value="ECO:0007669"/>
    <property type="project" value="UniProtKB-UniRule"/>
</dbReference>
<dbReference type="GO" id="GO:0051301">
    <property type="term" value="P:cell division"/>
    <property type="evidence" value="ECO:0007669"/>
    <property type="project" value="UniProtKB-KW"/>
</dbReference>
<dbReference type="GO" id="GO:0007059">
    <property type="term" value="P:chromosome segregation"/>
    <property type="evidence" value="ECO:0007669"/>
    <property type="project" value="UniProtKB-UniRule"/>
</dbReference>
<dbReference type="GO" id="GO:0006310">
    <property type="term" value="P:DNA recombination"/>
    <property type="evidence" value="ECO:0007669"/>
    <property type="project" value="UniProtKB-UniRule"/>
</dbReference>
<dbReference type="CDD" id="cd00397">
    <property type="entry name" value="DNA_BRE_C"/>
    <property type="match status" value="1"/>
</dbReference>
<dbReference type="Gene3D" id="1.10.150.130">
    <property type="match status" value="1"/>
</dbReference>
<dbReference type="Gene3D" id="1.10.443.10">
    <property type="entry name" value="Intergrase catalytic core"/>
    <property type="match status" value="1"/>
</dbReference>
<dbReference type="HAMAP" id="MF_01816">
    <property type="entry name" value="Recomb_XerS"/>
    <property type="match status" value="1"/>
</dbReference>
<dbReference type="InterPro" id="IPR044068">
    <property type="entry name" value="CB"/>
</dbReference>
<dbReference type="InterPro" id="IPR011010">
    <property type="entry name" value="DNA_brk_join_enz"/>
</dbReference>
<dbReference type="InterPro" id="IPR013762">
    <property type="entry name" value="Integrase-like_cat_sf"/>
</dbReference>
<dbReference type="InterPro" id="IPR002104">
    <property type="entry name" value="Integrase_catalytic"/>
</dbReference>
<dbReference type="InterPro" id="IPR010998">
    <property type="entry name" value="Integrase_recombinase_N"/>
</dbReference>
<dbReference type="InterPro" id="IPR004107">
    <property type="entry name" value="Integrase_SAM-like_N"/>
</dbReference>
<dbReference type="InterPro" id="IPR023670">
    <property type="entry name" value="Recomb_XerS"/>
</dbReference>
<dbReference type="InterPro" id="IPR050090">
    <property type="entry name" value="Tyrosine_recombinase_XerCD"/>
</dbReference>
<dbReference type="NCBIfam" id="NF003462">
    <property type="entry name" value="PRK05084.1"/>
    <property type="match status" value="1"/>
</dbReference>
<dbReference type="PANTHER" id="PTHR30349">
    <property type="entry name" value="PHAGE INTEGRASE-RELATED"/>
    <property type="match status" value="1"/>
</dbReference>
<dbReference type="PANTHER" id="PTHR30349:SF77">
    <property type="entry name" value="TYROSINE RECOMBINASE XERC"/>
    <property type="match status" value="1"/>
</dbReference>
<dbReference type="Pfam" id="PF02899">
    <property type="entry name" value="Phage_int_SAM_1"/>
    <property type="match status" value="1"/>
</dbReference>
<dbReference type="Pfam" id="PF00589">
    <property type="entry name" value="Phage_integrase"/>
    <property type="match status" value="1"/>
</dbReference>
<dbReference type="SUPFAM" id="SSF56349">
    <property type="entry name" value="DNA breaking-rejoining enzymes"/>
    <property type="match status" value="1"/>
</dbReference>
<dbReference type="PROSITE" id="PS51900">
    <property type="entry name" value="CB"/>
    <property type="match status" value="1"/>
</dbReference>
<dbReference type="PROSITE" id="PS51898">
    <property type="entry name" value="TYR_RECOMBINASE"/>
    <property type="match status" value="1"/>
</dbReference>
<sequence length="356" mass="41323">MRRELLLERIDKLKATMPWYILEYYQSKLAVPYSFTTLYEYLKEYDRFFNWVLESGITDASHIAEIPLSVLENMSKKDMEAFILYLRERPLLNANTTQNGVSQTTINRTLSALSSLYKYLTEEVENEQGEPYFYRNVMKKVATKKKKETLAARAENIKQKLFLGDETEEFLQYIDTEYPKKLSNRALSSFNKNKERDLAIIALLLASGVRLSEAVNLDLKDINLKMMVIEVTRKGGKRDSVNVAAFAKPYLEEYLSIRIKRYKAEKTDTAFFLTEYRGIPNRIDASSVEKMVAKYSEDFKVRVTPHKLRHTLATRLYDATKSQVLVSHQLGHASTQVTDLYTHIVNDEQKNALDKL</sequence>
<keyword id="KW-0131">Cell cycle</keyword>
<keyword id="KW-0132">Cell division</keyword>
<keyword id="KW-0159">Chromosome partition</keyword>
<keyword id="KW-0963">Cytoplasm</keyword>
<keyword id="KW-0229">DNA integration</keyword>
<keyword id="KW-0233">DNA recombination</keyword>
<keyword id="KW-0238">DNA-binding</keyword>
<keyword id="KW-1185">Reference proteome</keyword>
<name>XERS_STRSV</name>
<proteinExistence type="inferred from homology"/>
<gene>
    <name evidence="1" type="primary">xerS</name>
    <name type="ordered locus">SSA_1171</name>
</gene>
<feature type="chain" id="PRO_1000070250" description="Tyrosine recombinase XerS">
    <location>
        <begin position="1"/>
        <end position="356"/>
    </location>
</feature>
<feature type="domain" description="Core-binding (CB)" evidence="3">
    <location>
        <begin position="16"/>
        <end position="121"/>
    </location>
</feature>
<feature type="domain" description="Tyr recombinase" evidence="2">
    <location>
        <begin position="169"/>
        <end position="354"/>
    </location>
</feature>
<feature type="active site" evidence="1">
    <location>
        <position position="210"/>
    </location>
</feature>
<feature type="active site" evidence="1">
    <location>
        <position position="234"/>
    </location>
</feature>
<feature type="active site" evidence="1">
    <location>
        <position position="306"/>
    </location>
</feature>
<feature type="active site" evidence="1">
    <location>
        <position position="309"/>
    </location>
</feature>
<feature type="active site" evidence="1">
    <location>
        <position position="332"/>
    </location>
</feature>
<feature type="active site" description="O-(3'-phospho-DNA)-tyrosine intermediate" evidence="1">
    <location>
        <position position="341"/>
    </location>
</feature>
<organism>
    <name type="scientific">Streptococcus sanguinis (strain SK36)</name>
    <dbReference type="NCBI Taxonomy" id="388919"/>
    <lineage>
        <taxon>Bacteria</taxon>
        <taxon>Bacillati</taxon>
        <taxon>Bacillota</taxon>
        <taxon>Bacilli</taxon>
        <taxon>Lactobacillales</taxon>
        <taxon>Streptococcaceae</taxon>
        <taxon>Streptococcus</taxon>
    </lineage>
</organism>
<comment type="function">
    <text evidence="1">Site-specific tyrosine recombinase, which acts by catalyzing the cutting and rejoining of the recombining DNA molecules. Essential to convert dimers of the bacterial chromosome into monomers to permit their segregation at cell division.</text>
</comment>
<comment type="activity regulation">
    <text evidence="1">FtsK is required for recombination.</text>
</comment>
<comment type="subcellular location">
    <subcellularLocation>
        <location evidence="1">Cytoplasm</location>
    </subcellularLocation>
</comment>
<comment type="similarity">
    <text evidence="1">Belongs to the 'phage' integrase family. XerS subfamily.</text>
</comment>
<accession>A3CN22</accession>
<protein>
    <recommendedName>
        <fullName evidence="1">Tyrosine recombinase XerS</fullName>
    </recommendedName>
</protein>
<reference key="1">
    <citation type="journal article" date="2007" name="J. Bacteriol.">
        <title>Genome of the opportunistic pathogen Streptococcus sanguinis.</title>
        <authorList>
            <person name="Xu P."/>
            <person name="Alves J.M."/>
            <person name="Kitten T."/>
            <person name="Brown A."/>
            <person name="Chen Z."/>
            <person name="Ozaki L.S."/>
            <person name="Manque P."/>
            <person name="Ge X."/>
            <person name="Serrano M.G."/>
            <person name="Puiu D."/>
            <person name="Hendricks S."/>
            <person name="Wang Y."/>
            <person name="Chaplin M.D."/>
            <person name="Akan D."/>
            <person name="Paik S."/>
            <person name="Peterson D.L."/>
            <person name="Macrina F.L."/>
            <person name="Buck G.A."/>
        </authorList>
    </citation>
    <scope>NUCLEOTIDE SEQUENCE [LARGE SCALE GENOMIC DNA]</scope>
    <source>
        <strain>SK36</strain>
    </source>
</reference>